<protein>
    <recommendedName>
        <fullName>Nucleoside diphosphate kinase B</fullName>
        <shortName>NDK B</shortName>
        <shortName>NDP kinase B</shortName>
        <ecNumber evidence="1">2.7.4.6</ecNumber>
    </recommendedName>
    <alternativeName>
        <fullName>Histidine protein kinase NDKB</fullName>
        <ecNumber evidence="1">2.7.13.3</ecNumber>
    </alternativeName>
    <alternativeName>
        <fullName>P18</fullName>
    </alternativeName>
</protein>
<name>NDKB_RAT</name>
<gene>
    <name type="primary">Nme2</name>
</gene>
<keyword id="KW-0067">ATP-binding</keyword>
<keyword id="KW-0966">Cell projection</keyword>
<keyword id="KW-0963">Cytoplasm</keyword>
<keyword id="KW-0903">Direct protein sequencing</keyword>
<keyword id="KW-0238">DNA-binding</keyword>
<keyword id="KW-0418">Kinase</keyword>
<keyword id="KW-0460">Magnesium</keyword>
<keyword id="KW-0479">Metal-binding</keyword>
<keyword id="KW-0546">Nucleotide metabolism</keyword>
<keyword id="KW-0547">Nucleotide-binding</keyword>
<keyword id="KW-0539">Nucleus</keyword>
<keyword id="KW-1185">Reference proteome</keyword>
<keyword id="KW-0804">Transcription</keyword>
<keyword id="KW-0805">Transcription regulation</keyword>
<keyword id="KW-0808">Transferase</keyword>
<organism>
    <name type="scientific">Rattus norvegicus</name>
    <name type="common">Rat</name>
    <dbReference type="NCBI Taxonomy" id="10116"/>
    <lineage>
        <taxon>Eukaryota</taxon>
        <taxon>Metazoa</taxon>
        <taxon>Chordata</taxon>
        <taxon>Craniata</taxon>
        <taxon>Vertebrata</taxon>
        <taxon>Euteleostomi</taxon>
        <taxon>Mammalia</taxon>
        <taxon>Eutheria</taxon>
        <taxon>Euarchontoglires</taxon>
        <taxon>Glires</taxon>
        <taxon>Rodentia</taxon>
        <taxon>Myomorpha</taxon>
        <taxon>Muroidea</taxon>
        <taxon>Muridae</taxon>
        <taxon>Murinae</taxon>
        <taxon>Rattus</taxon>
    </lineage>
</organism>
<dbReference type="EC" id="2.7.4.6" evidence="1"/>
<dbReference type="EC" id="2.7.13.3" evidence="1"/>
<dbReference type="EMBL" id="M55331">
    <property type="protein sequence ID" value="AAA41684.1"/>
    <property type="molecule type" value="mRNA"/>
</dbReference>
<dbReference type="EMBL" id="M91597">
    <property type="protein sequence ID" value="AAA42017.1"/>
    <property type="molecule type" value="mRNA"/>
</dbReference>
<dbReference type="EMBL" id="BC086599">
    <property type="protein sequence ID" value="AAH86599.1"/>
    <property type="molecule type" value="mRNA"/>
</dbReference>
<dbReference type="PIR" id="A41849">
    <property type="entry name" value="A38369"/>
</dbReference>
<dbReference type="RefSeq" id="NP_114021.2">
    <property type="nucleotide sequence ID" value="NM_031833.3"/>
</dbReference>
<dbReference type="SMR" id="P19804"/>
<dbReference type="BioGRID" id="249827">
    <property type="interactions" value="4"/>
</dbReference>
<dbReference type="FunCoup" id="P19804">
    <property type="interactions" value="2277"/>
</dbReference>
<dbReference type="IntAct" id="P19804">
    <property type="interactions" value="1"/>
</dbReference>
<dbReference type="MINT" id="P19804"/>
<dbReference type="STRING" id="10116.ENSRNOP00000003611"/>
<dbReference type="GlyGen" id="P19804">
    <property type="glycosylation" value="1 site, 1 O-linked glycan (1 site)"/>
</dbReference>
<dbReference type="iPTMnet" id="P19804"/>
<dbReference type="PhosphoSitePlus" id="P19804"/>
<dbReference type="SwissPalm" id="P19804"/>
<dbReference type="jPOST" id="P19804"/>
<dbReference type="PaxDb" id="10116-ENSRNOP00000003611"/>
<dbReference type="Ensembl" id="ENSRNOT00000003611.4">
    <property type="protein sequence ID" value="ENSRNOP00000003611.3"/>
    <property type="gene ID" value="ENSRNOG00000002671.4"/>
</dbReference>
<dbReference type="GeneID" id="83782"/>
<dbReference type="KEGG" id="rno:83782"/>
<dbReference type="AGR" id="RGD:619877"/>
<dbReference type="CTD" id="4831"/>
<dbReference type="RGD" id="619877">
    <property type="gene designation" value="Nme2"/>
</dbReference>
<dbReference type="eggNOG" id="KOG0888">
    <property type="taxonomic scope" value="Eukaryota"/>
</dbReference>
<dbReference type="GeneTree" id="ENSGT00940000161569"/>
<dbReference type="HOGENOM" id="CLU_060216_6_3_1"/>
<dbReference type="InParanoid" id="P19804"/>
<dbReference type="OMA" id="NIWFKAD"/>
<dbReference type="OrthoDB" id="2162449at2759"/>
<dbReference type="PhylomeDB" id="P19804"/>
<dbReference type="TreeFam" id="TF106373"/>
<dbReference type="Reactome" id="R-RNO-499943">
    <property type="pathway name" value="Interconversion of nucleotide di- and triphosphates"/>
</dbReference>
<dbReference type="Reactome" id="R-RNO-6798695">
    <property type="pathway name" value="Neutrophil degranulation"/>
</dbReference>
<dbReference type="Reactome" id="R-RNO-9748787">
    <property type="pathway name" value="Azathioprine ADME"/>
</dbReference>
<dbReference type="Reactome" id="R-RNO-9755088">
    <property type="pathway name" value="Ribavirin ADME"/>
</dbReference>
<dbReference type="SABIO-RK" id="P19804"/>
<dbReference type="PRO" id="PR:P19804"/>
<dbReference type="Proteomes" id="UP000002494">
    <property type="component" value="Chromosome 10"/>
</dbReference>
<dbReference type="Bgee" id="ENSRNOG00000002671">
    <property type="expression patterns" value="Expressed in heart and 20 other cell types or tissues"/>
</dbReference>
<dbReference type="GO" id="GO:0071944">
    <property type="term" value="C:cell periphery"/>
    <property type="evidence" value="ECO:0000250"/>
    <property type="project" value="UniProtKB"/>
</dbReference>
<dbReference type="GO" id="GO:0005737">
    <property type="term" value="C:cytoplasm"/>
    <property type="evidence" value="ECO:0000250"/>
    <property type="project" value="UniProtKB"/>
</dbReference>
<dbReference type="GO" id="GO:0005882">
    <property type="term" value="C:intermediate filament"/>
    <property type="evidence" value="ECO:0000314"/>
    <property type="project" value="RGD"/>
</dbReference>
<dbReference type="GO" id="GO:0030027">
    <property type="term" value="C:lamellipodium"/>
    <property type="evidence" value="ECO:0000250"/>
    <property type="project" value="HGNC-UCL"/>
</dbReference>
<dbReference type="GO" id="GO:0031966">
    <property type="term" value="C:mitochondrial membrane"/>
    <property type="evidence" value="ECO:0000314"/>
    <property type="project" value="RGD"/>
</dbReference>
<dbReference type="GO" id="GO:0005634">
    <property type="term" value="C:nucleus"/>
    <property type="evidence" value="ECO:0007669"/>
    <property type="project" value="UniProtKB-SubCell"/>
</dbReference>
<dbReference type="GO" id="GO:0048471">
    <property type="term" value="C:perinuclear region of cytoplasm"/>
    <property type="evidence" value="ECO:0000314"/>
    <property type="project" value="RGD"/>
</dbReference>
<dbReference type="GO" id="GO:0001726">
    <property type="term" value="C:ruffle"/>
    <property type="evidence" value="ECO:0000250"/>
    <property type="project" value="HGNC-UCL"/>
</dbReference>
<dbReference type="GO" id="GO:0005524">
    <property type="term" value="F:ATP binding"/>
    <property type="evidence" value="ECO:0007669"/>
    <property type="project" value="UniProtKB-KW"/>
</dbReference>
<dbReference type="GO" id="GO:0003677">
    <property type="term" value="F:DNA binding"/>
    <property type="evidence" value="ECO:0000250"/>
    <property type="project" value="UniProtKB"/>
</dbReference>
<dbReference type="GO" id="GO:0019899">
    <property type="term" value="F:enzyme binding"/>
    <property type="evidence" value="ECO:0000353"/>
    <property type="project" value="RGD"/>
</dbReference>
<dbReference type="GO" id="GO:0005504">
    <property type="term" value="F:fatty acid binding"/>
    <property type="evidence" value="ECO:0000353"/>
    <property type="project" value="RGD"/>
</dbReference>
<dbReference type="GO" id="GO:0051880">
    <property type="term" value="F:G-quadruplex DNA binding"/>
    <property type="evidence" value="ECO:0000250"/>
    <property type="project" value="UniProtKB"/>
</dbReference>
<dbReference type="GO" id="GO:0019003">
    <property type="term" value="F:GDP binding"/>
    <property type="evidence" value="ECO:0000266"/>
    <property type="project" value="RGD"/>
</dbReference>
<dbReference type="GO" id="GO:1901363">
    <property type="term" value="F:heterocyclic compound binding"/>
    <property type="evidence" value="ECO:0000353"/>
    <property type="project" value="RGD"/>
</dbReference>
<dbReference type="GO" id="GO:0042802">
    <property type="term" value="F:identical protein binding"/>
    <property type="evidence" value="ECO:0000353"/>
    <property type="project" value="RGD"/>
</dbReference>
<dbReference type="GO" id="GO:0019215">
    <property type="term" value="F:intermediate filament binding"/>
    <property type="evidence" value="ECO:0000353"/>
    <property type="project" value="RGD"/>
</dbReference>
<dbReference type="GO" id="GO:0046872">
    <property type="term" value="F:metal ion binding"/>
    <property type="evidence" value="ECO:0007669"/>
    <property type="project" value="UniProtKB-KW"/>
</dbReference>
<dbReference type="GO" id="GO:0004550">
    <property type="term" value="F:nucleoside diphosphate kinase activity"/>
    <property type="evidence" value="ECO:0000314"/>
    <property type="project" value="RGD"/>
</dbReference>
<dbReference type="GO" id="GO:0004673">
    <property type="term" value="F:protein histidine kinase activity"/>
    <property type="evidence" value="ECO:0007669"/>
    <property type="project" value="UniProtKB-EC"/>
</dbReference>
<dbReference type="GO" id="GO:0004674">
    <property type="term" value="F:protein serine/threonine kinase activity"/>
    <property type="evidence" value="ECO:0000314"/>
    <property type="project" value="RGD"/>
</dbReference>
<dbReference type="GO" id="GO:0003713">
    <property type="term" value="F:transcription coactivator activity"/>
    <property type="evidence" value="ECO:0000266"/>
    <property type="project" value="RGD"/>
</dbReference>
<dbReference type="GO" id="GO:0007189">
    <property type="term" value="P:adenylate cyclase-activating G protein-coupled receptor signaling pathway"/>
    <property type="evidence" value="ECO:0000315"/>
    <property type="project" value="RGD"/>
</dbReference>
<dbReference type="GO" id="GO:0071398">
    <property type="term" value="P:cellular response to fatty acid"/>
    <property type="evidence" value="ECO:0000270"/>
    <property type="project" value="RGD"/>
</dbReference>
<dbReference type="GO" id="GO:0071333">
    <property type="term" value="P:cellular response to glucose stimulus"/>
    <property type="evidence" value="ECO:0000270"/>
    <property type="project" value="RGD"/>
</dbReference>
<dbReference type="GO" id="GO:0034599">
    <property type="term" value="P:cellular response to oxidative stress"/>
    <property type="evidence" value="ECO:0000270"/>
    <property type="project" value="RGD"/>
</dbReference>
<dbReference type="GO" id="GO:0006241">
    <property type="term" value="P:CTP biosynthetic process"/>
    <property type="evidence" value="ECO:0000314"/>
    <property type="project" value="RGD"/>
</dbReference>
<dbReference type="GO" id="GO:0006183">
    <property type="term" value="P:GTP biosynthetic process"/>
    <property type="evidence" value="ECO:0000314"/>
    <property type="project" value="RGD"/>
</dbReference>
<dbReference type="GO" id="GO:0007229">
    <property type="term" value="P:integrin-mediated signaling pathway"/>
    <property type="evidence" value="ECO:0000250"/>
    <property type="project" value="UniProtKB"/>
</dbReference>
<dbReference type="GO" id="GO:0043066">
    <property type="term" value="P:negative regulation of apoptotic process"/>
    <property type="evidence" value="ECO:0000250"/>
    <property type="project" value="HGNC-UCL"/>
</dbReference>
<dbReference type="GO" id="GO:0002762">
    <property type="term" value="P:negative regulation of myeloid leukocyte differentiation"/>
    <property type="evidence" value="ECO:0000314"/>
    <property type="project" value="RGD"/>
</dbReference>
<dbReference type="GO" id="GO:0009142">
    <property type="term" value="P:nucleoside triphosphate biosynthetic process"/>
    <property type="evidence" value="ECO:0000266"/>
    <property type="project" value="RGD"/>
</dbReference>
<dbReference type="GO" id="GO:0045893">
    <property type="term" value="P:positive regulation of DNA-templated transcription"/>
    <property type="evidence" value="ECO:0000250"/>
    <property type="project" value="UniProtKB"/>
</dbReference>
<dbReference type="GO" id="GO:0050679">
    <property type="term" value="P:positive regulation of epithelial cell proliferation"/>
    <property type="evidence" value="ECO:0000250"/>
    <property type="project" value="HGNC-UCL"/>
</dbReference>
<dbReference type="GO" id="GO:0045618">
    <property type="term" value="P:positive regulation of keratinocyte differentiation"/>
    <property type="evidence" value="ECO:0000250"/>
    <property type="project" value="HGNC-UCL"/>
</dbReference>
<dbReference type="GO" id="GO:0010976">
    <property type="term" value="P:positive regulation of neuron projection development"/>
    <property type="evidence" value="ECO:0000315"/>
    <property type="project" value="RGD"/>
</dbReference>
<dbReference type="GO" id="GO:0045944">
    <property type="term" value="P:positive regulation of transcription by RNA polymerase II"/>
    <property type="evidence" value="ECO:0000250"/>
    <property type="project" value="UniProtKB"/>
</dbReference>
<dbReference type="GO" id="GO:0042981">
    <property type="term" value="P:regulation of apoptotic process"/>
    <property type="evidence" value="ECO:0000318"/>
    <property type="project" value="GO_Central"/>
</dbReference>
<dbReference type="GO" id="GO:0045682">
    <property type="term" value="P:regulation of epidermis development"/>
    <property type="evidence" value="ECO:0000250"/>
    <property type="project" value="HGNC-UCL"/>
</dbReference>
<dbReference type="GO" id="GO:0060416">
    <property type="term" value="P:response to growth hormone"/>
    <property type="evidence" value="ECO:0000270"/>
    <property type="project" value="RGD"/>
</dbReference>
<dbReference type="GO" id="GO:0006228">
    <property type="term" value="P:UTP biosynthetic process"/>
    <property type="evidence" value="ECO:0000314"/>
    <property type="project" value="RGD"/>
</dbReference>
<dbReference type="CDD" id="cd04413">
    <property type="entry name" value="NDPk_I"/>
    <property type="match status" value="1"/>
</dbReference>
<dbReference type="FunFam" id="3.30.70.141:FF:000015">
    <property type="entry name" value="Nucleoside diphosphate kinase B"/>
    <property type="match status" value="1"/>
</dbReference>
<dbReference type="Gene3D" id="3.30.70.141">
    <property type="entry name" value="Nucleoside diphosphate kinase-like domain"/>
    <property type="match status" value="1"/>
</dbReference>
<dbReference type="HAMAP" id="MF_00451">
    <property type="entry name" value="NDP_kinase"/>
    <property type="match status" value="1"/>
</dbReference>
<dbReference type="InterPro" id="IPR034907">
    <property type="entry name" value="NDK-like_dom"/>
</dbReference>
<dbReference type="InterPro" id="IPR036850">
    <property type="entry name" value="NDK-like_dom_sf"/>
</dbReference>
<dbReference type="InterPro" id="IPR001564">
    <property type="entry name" value="Nucleoside_diP_kinase"/>
</dbReference>
<dbReference type="InterPro" id="IPR023005">
    <property type="entry name" value="Nucleoside_diP_kinase_AS"/>
</dbReference>
<dbReference type="NCBIfam" id="NF001908">
    <property type="entry name" value="PRK00668.1"/>
    <property type="match status" value="1"/>
</dbReference>
<dbReference type="PANTHER" id="PTHR11349">
    <property type="entry name" value="NUCLEOSIDE DIPHOSPHATE KINASE"/>
    <property type="match status" value="1"/>
</dbReference>
<dbReference type="Pfam" id="PF00334">
    <property type="entry name" value="NDK"/>
    <property type="match status" value="1"/>
</dbReference>
<dbReference type="PRINTS" id="PR01243">
    <property type="entry name" value="NUCDPKINASE"/>
</dbReference>
<dbReference type="SMART" id="SM00562">
    <property type="entry name" value="NDK"/>
    <property type="match status" value="1"/>
</dbReference>
<dbReference type="SUPFAM" id="SSF54919">
    <property type="entry name" value="Nucleoside diphosphate kinase, NDK"/>
    <property type="match status" value="1"/>
</dbReference>
<dbReference type="PROSITE" id="PS00469">
    <property type="entry name" value="NDPK"/>
    <property type="match status" value="1"/>
</dbReference>
<dbReference type="PROSITE" id="PS51374">
    <property type="entry name" value="NDPK_LIKE"/>
    <property type="match status" value="1"/>
</dbReference>
<feature type="chain" id="PRO_0000137119" description="Nucleoside diphosphate kinase B">
    <location>
        <begin position="1"/>
        <end position="152"/>
    </location>
</feature>
<feature type="region of interest" description="Interaction with AKAP13" evidence="1">
    <location>
        <begin position="1"/>
        <end position="66"/>
    </location>
</feature>
<feature type="active site" description="Pros-phosphohistidine intermediate" evidence="1">
    <location>
        <position position="118"/>
    </location>
</feature>
<feature type="binding site" evidence="1">
    <location>
        <position position="12"/>
    </location>
    <ligand>
        <name>ATP</name>
        <dbReference type="ChEBI" id="CHEBI:30616"/>
    </ligand>
</feature>
<feature type="binding site" evidence="1">
    <location>
        <position position="60"/>
    </location>
    <ligand>
        <name>ATP</name>
        <dbReference type="ChEBI" id="CHEBI:30616"/>
    </ligand>
</feature>
<feature type="binding site" evidence="1">
    <location>
        <position position="88"/>
    </location>
    <ligand>
        <name>ATP</name>
        <dbReference type="ChEBI" id="CHEBI:30616"/>
    </ligand>
</feature>
<feature type="binding site" evidence="1">
    <location>
        <position position="94"/>
    </location>
    <ligand>
        <name>ATP</name>
        <dbReference type="ChEBI" id="CHEBI:30616"/>
    </ligand>
</feature>
<feature type="binding site" evidence="1">
    <location>
        <position position="105"/>
    </location>
    <ligand>
        <name>ATP</name>
        <dbReference type="ChEBI" id="CHEBI:30616"/>
    </ligand>
</feature>
<feature type="binding site" evidence="1">
    <location>
        <position position="115"/>
    </location>
    <ligand>
        <name>ATP</name>
        <dbReference type="ChEBI" id="CHEBI:30616"/>
    </ligand>
</feature>
<feature type="sequence conflict" description="In Ref. 3; AAA42017." evidence="5" ref="3">
    <original>V</original>
    <variation>W</variation>
    <location>
        <position position="89"/>
    </location>
</feature>
<comment type="function">
    <text evidence="1 2">Major role in the synthesis of nucleoside triphosphates other than ATP. The ATP gamma phosphate is transferred to the NDP beta phosphate via a ping-pong mechanism, using a phosphorylated active-site intermediate (By similarity). Negatively regulates Rho activity by interacting with AKAP13/LBC. Acts as a transcriptional activator of the MYC gene; binds DNA non-specifically. Binds to both single-stranded guanine- and cytosine-rich strands within the nuclease hypersensitive element (NHE) III(1) region of the MYC gene promoter. Does not bind to duplex NHE III(1). Has G-quadruplex (G4) DNA-binding activity, which is independent of its nucleotide-binding and kinase activity. Binds both folded and unfolded G4 with similar low nanomolar affinities. Stabilizes folded G4s regardless of whether they are prefolded or not. Exhibits histidine protein kinase activity (By similarity).</text>
</comment>
<comment type="catalytic activity">
    <reaction evidence="1">
        <text>a 2'-deoxyribonucleoside 5'-diphosphate + ATP = a 2'-deoxyribonucleoside 5'-triphosphate + ADP</text>
        <dbReference type="Rhea" id="RHEA:44640"/>
        <dbReference type="ChEBI" id="CHEBI:30616"/>
        <dbReference type="ChEBI" id="CHEBI:61560"/>
        <dbReference type="ChEBI" id="CHEBI:73316"/>
        <dbReference type="ChEBI" id="CHEBI:456216"/>
        <dbReference type="EC" id="2.7.4.6"/>
    </reaction>
</comment>
<comment type="catalytic activity">
    <reaction evidence="1">
        <text>a ribonucleoside 5'-diphosphate + ATP = a ribonucleoside 5'-triphosphate + ADP</text>
        <dbReference type="Rhea" id="RHEA:18113"/>
        <dbReference type="ChEBI" id="CHEBI:30616"/>
        <dbReference type="ChEBI" id="CHEBI:57930"/>
        <dbReference type="ChEBI" id="CHEBI:61557"/>
        <dbReference type="ChEBI" id="CHEBI:456216"/>
        <dbReference type="EC" id="2.7.4.6"/>
    </reaction>
</comment>
<comment type="catalytic activity">
    <reaction evidence="1">
        <text>ATP + protein L-histidine = ADP + protein N-phospho-L-histidine.</text>
        <dbReference type="EC" id="2.7.13.3"/>
    </reaction>
</comment>
<comment type="cofactor">
    <cofactor evidence="1">
        <name>Mg(2+)</name>
        <dbReference type="ChEBI" id="CHEBI:18420"/>
    </cofactor>
</comment>
<comment type="subunit">
    <text evidence="1 3 4">Hexamer of two different chains: A and B (A6, A5B, A4B2, A3B3, A2B4, AB5, B6) (By similarity). Interacts with CAPN8 (By similarity). Interacts with AKAP13 (By similarity). Interacts with ITGB1BP1 (via C-terminal domain region) (By similarity). Interacts with BCL2L10 (PubMed:17532299).</text>
</comment>
<comment type="subcellular location">
    <subcellularLocation>
        <location evidence="1">Cytoplasm</location>
    </subcellularLocation>
    <subcellularLocation>
        <location evidence="1">Cell projection</location>
        <location evidence="1">Lamellipodium</location>
    </subcellularLocation>
    <subcellularLocation>
        <location evidence="1">Cell projection</location>
        <location evidence="1">Ruffle</location>
    </subcellularLocation>
    <subcellularLocation>
        <location evidence="1">Nucleus</location>
    </subcellularLocation>
    <text evidence="1">Colocalizes with ITGB1 and ITGB1BP1 at the edge or peripheral ruffles and lamellipodia during the early stages of cell spreading on fibronectin or collagen but not on vitronectin or laminin substrates.</text>
</comment>
<comment type="PTM">
    <text>The N-terminus is blocked.</text>
</comment>
<comment type="similarity">
    <text evidence="5">Belongs to the NDK family.</text>
</comment>
<accession>P19804</accession>
<reference key="1">
    <citation type="journal article" date="1990" name="J. Biol. Chem.">
        <title>Isolation and characterization of a cDNA clone encoding rat nucleoside diphosphate kinase.</title>
        <authorList>
            <person name="Kimura N."/>
            <person name="Shimada N."/>
            <person name="Nomura K."/>
            <person name="Watanabe K."/>
        </authorList>
    </citation>
    <scope>NUCLEOTIDE SEQUENCE [MRNA]</scope>
    <scope>PARTIAL PROTEIN SEQUENCE</scope>
    <source>
        <strain>Wistar</strain>
    </source>
</reference>
<reference key="2">
    <citation type="journal article" date="1992" name="J. Biol. Chem.">
        <title>Isolation and characterization of a gene encoding rat nucleoside diphosphate kinase.</title>
        <authorList>
            <person name="Ishikawa N."/>
            <person name="Shimada N."/>
            <person name="Munakata Y."/>
            <person name="Watanabe K."/>
            <person name="Kimura N."/>
        </authorList>
    </citation>
    <scope>NUCLEOTIDE SEQUENCE [MRNA]</scope>
</reference>
<reference key="3">
    <citation type="journal article" date="1992" name="Biochemistry">
        <title>A cromoglycate binding protein from rat mast cells of a leukemia line is a nucleoside diphosphate kinase.</title>
        <authorList>
            <person name="Hemmerich S."/>
            <person name="Yarden Y."/>
            <person name="Pecht I."/>
        </authorList>
    </citation>
    <scope>NUCLEOTIDE SEQUENCE [MRNA]</scope>
    <source>
        <strain>Sprague-Dawley</strain>
        <tissue>Mast cell</tissue>
    </source>
</reference>
<reference key="4">
    <citation type="journal article" date="2004" name="Genome Res.">
        <title>The status, quality, and expansion of the NIH full-length cDNA project: the Mammalian Gene Collection (MGC).</title>
        <authorList>
            <consortium name="The MGC Project Team"/>
        </authorList>
    </citation>
    <scope>NUCLEOTIDE SEQUENCE [LARGE SCALE MRNA]</scope>
    <source>
        <tissue>Brain</tissue>
    </source>
</reference>
<reference key="5">
    <citation type="submission" date="2007-07" db="UniProtKB">
        <authorList>
            <person name="Lubec G."/>
            <person name="Afjehi-Sadat L."/>
            <person name="Kang S.U."/>
        </authorList>
    </citation>
    <scope>PROTEIN SEQUENCE OF 7-26; 57-66; 89-114 AND 129-143</scope>
    <scope>IDENTIFICATION BY MASS SPECTROMETRY</scope>
    <source>
        <strain>Sprague-Dawley</strain>
        <tissue>Brain</tissue>
        <tissue>Spinal cord</tissue>
    </source>
</reference>
<reference key="6">
    <citation type="journal article" date="2007" name="Biochem. Biophys. Res. Commun.">
        <title>NM23-H2 involves in negative regulation of Diva and Bcl2L10 in apoptosis signaling.</title>
        <authorList>
            <person name="Kang Y."/>
            <person name="Lee D.C."/>
            <person name="Han J."/>
            <person name="Yoon S."/>
            <person name="Won M."/>
            <person name="Yeom J.H."/>
            <person name="Seong M.J."/>
            <person name="Ko J.J."/>
            <person name="Lee K.A."/>
            <person name="Lee K."/>
            <person name="Bae J."/>
        </authorList>
    </citation>
    <scope>INTERACTION WITH BCL2L10</scope>
</reference>
<proteinExistence type="evidence at protein level"/>
<evidence type="ECO:0000250" key="1">
    <source>
        <dbReference type="UniProtKB" id="P22392"/>
    </source>
</evidence>
<evidence type="ECO:0000250" key="2">
    <source>
        <dbReference type="UniProtKB" id="P36010"/>
    </source>
</evidence>
<evidence type="ECO:0000250" key="3">
    <source>
        <dbReference type="UniProtKB" id="Q01768"/>
    </source>
</evidence>
<evidence type="ECO:0000269" key="4">
    <source>
    </source>
</evidence>
<evidence type="ECO:0000305" key="5"/>
<sequence>MANLERTFIAIKPDGVQRGLVGEIIKRFEQKGFRLVAMKFLRASEEHLKQHYIDLKDRPFFPGLVKYMNSGPVVAMVWEGLNVVKTGRVMLGETNPADSKPGTIRGDFCIQVGRNIIHGSDSVESAEKEIGLWFKPEELIDYKSCAHDWVYE</sequence>